<comment type="function">
    <text evidence="2">Component of the cytochrome c oxidase, the last enzyme in the mitochondrial electron transport chain which drives oxidative phosphorylation. The respiratory chain contains 3 multisubunit complexes succinate dehydrogenase (complex II, CII), ubiquinol-cytochrome c oxidoreductase (cytochrome b-c1 complex, complex III, CIII) and cytochrome c oxidase (complex IV, CIV), that cooperate to transfer electrons derived from NADH and succinate to molecular oxygen, creating an electrochemical gradient over the inner membrane that drives transmembrane transport and the ATP synthase. Cytochrome c oxidase is the component of the respiratory chain that catalyzes the reduction of oxygen to water. Electrons originating from reduced cytochrome c in the intermembrane space (IMS) are transferred via the dinuclear copper A center (CU(A)) of subunit 2 and heme A of subunit 1 to the active site in subunit 1, a binuclear center (BNC) formed by heme A3 and copper B (CU(B)). The BNC reduces molecular oxygen to 2 water molecules using 4 electrons from cytochrome c in the IMS and 4 protons from the mitochondrial matrix.</text>
</comment>
<comment type="catalytic activity">
    <reaction evidence="2">
        <text>4 Fe(II)-[cytochrome c] + O2 + 8 H(+)(in) = 4 Fe(III)-[cytochrome c] + 2 H2O + 4 H(+)(out)</text>
        <dbReference type="Rhea" id="RHEA:11436"/>
        <dbReference type="Rhea" id="RHEA-COMP:10350"/>
        <dbReference type="Rhea" id="RHEA-COMP:14399"/>
        <dbReference type="ChEBI" id="CHEBI:15377"/>
        <dbReference type="ChEBI" id="CHEBI:15378"/>
        <dbReference type="ChEBI" id="CHEBI:15379"/>
        <dbReference type="ChEBI" id="CHEBI:29033"/>
        <dbReference type="ChEBI" id="CHEBI:29034"/>
        <dbReference type="EC" id="7.1.1.9"/>
    </reaction>
    <physiologicalReaction direction="left-to-right" evidence="2">
        <dbReference type="Rhea" id="RHEA:11437"/>
    </physiologicalReaction>
</comment>
<comment type="cofactor">
    <cofactor evidence="2">
        <name>heme</name>
        <dbReference type="ChEBI" id="CHEBI:30413"/>
    </cofactor>
    <text evidence="2">Binds 2 heme A groups non-covalently per subunit.</text>
</comment>
<comment type="cofactor">
    <cofactor evidence="2">
        <name>Cu cation</name>
        <dbReference type="ChEBI" id="CHEBI:23378"/>
    </cofactor>
    <text evidence="2">Binds a copper B center.</text>
</comment>
<comment type="pathway">
    <text evidence="2">Energy metabolism; oxidative phosphorylation.</text>
</comment>
<comment type="subunit">
    <text evidence="2">Component of the cytochrome c oxidase (complex IV, CIV), a multisubunit enzyme composed of a catalytic core of 3 subunits and several supernumerary subunits. The complex exists as a monomer or a dimer and forms supercomplexes (SCs) in the inner mitochondrial membrane with ubiquinol-cytochrome c oxidoreductase (cytochrome b-c1 complex, complex III, CIII).</text>
</comment>
<comment type="subcellular location">
    <subcellularLocation>
        <location evidence="2">Mitochondrion inner membrane</location>
        <topology evidence="2">Multi-pass membrane protein</topology>
    </subcellularLocation>
</comment>
<comment type="similarity">
    <text evidence="4">Belongs to the heme-copper respiratory oxidase family.</text>
</comment>
<protein>
    <recommendedName>
        <fullName>Cytochrome c oxidase subunit 1</fullName>
        <ecNumber>7.1.1.9</ecNumber>
    </recommendedName>
    <alternativeName>
        <fullName>Cytochrome c oxidase polypeptide I</fullName>
    </alternativeName>
</protein>
<sequence>MVTRWLYSTNHKDIGTMYLIFGAFSGVLGTVFSLLIRMELAQPGNQILNGNHQLYNVIITAHAFLMIFFMLMPALMGGFGNWFLPILIGAPDMAFPRLNNISFWLLPPSLLLLVSSALVEVGAGTGWTVYPPLASIASHSGGSVDLAIFSLHLAGVSSILGAINFICTVFNMRAPGMSMLDLLFVWAVFITAWLLLLCLPVLAGGITMLLTDRNFNTSFFDPAGGGDPILYQHLFWFFGHPEVYILIIPGFGIISHVIATFSKKPIFGYLGMVYAMCSIGILGFIVWAHHMYVVGLDIDTRAYFTAATMIIAVPTGIKIFSWVATMWGGSIELRTPMLFAVGFLFLFTVGGLTGVVLANSGLDVAFHDTYYVVAHFHYVLSMGAVFALFSGFYYWIGKITGLQYPETLGQIHFWLMFLGVNITFFPMHFLGLAGMPRRIPDYPDCYAGWNAVASYGSYLSITAVLFFFYVVYKTLTSNEVCPRNPWETTPGVSPTLEWMLPSPPAFHTFEEIQV</sequence>
<gene>
    <name type="primary">COX1</name>
    <name type="synonym">COXI</name>
</gene>
<geneLocation type="mitochondrion"/>
<organism>
    <name type="scientific">Prototheca wickerhamii</name>
    <dbReference type="NCBI Taxonomy" id="3111"/>
    <lineage>
        <taxon>Eukaryota</taxon>
        <taxon>Viridiplantae</taxon>
        <taxon>Chlorophyta</taxon>
        <taxon>core chlorophytes</taxon>
        <taxon>Trebouxiophyceae</taxon>
        <taxon>Chlorellales</taxon>
        <taxon>Chlorellaceae</taxon>
        <taxon>Prototheca</taxon>
    </lineage>
</organism>
<name>COX1_PROWI</name>
<dbReference type="EC" id="7.1.1.9"/>
<dbReference type="EMBL" id="X68721">
    <property type="protein sequence ID" value="CAA48661.1"/>
    <property type="molecule type" value="Genomic_DNA"/>
</dbReference>
<dbReference type="PIR" id="S30291">
    <property type="entry name" value="S30291"/>
</dbReference>
<dbReference type="SMR" id="Q05143"/>
<dbReference type="UniPathway" id="UPA00705"/>
<dbReference type="GO" id="GO:0005743">
    <property type="term" value="C:mitochondrial inner membrane"/>
    <property type="evidence" value="ECO:0007669"/>
    <property type="project" value="UniProtKB-SubCell"/>
</dbReference>
<dbReference type="GO" id="GO:0045277">
    <property type="term" value="C:respiratory chain complex IV"/>
    <property type="evidence" value="ECO:0007669"/>
    <property type="project" value="InterPro"/>
</dbReference>
<dbReference type="GO" id="GO:0004129">
    <property type="term" value="F:cytochrome-c oxidase activity"/>
    <property type="evidence" value="ECO:0007669"/>
    <property type="project" value="UniProtKB-EC"/>
</dbReference>
<dbReference type="GO" id="GO:0020037">
    <property type="term" value="F:heme binding"/>
    <property type="evidence" value="ECO:0007669"/>
    <property type="project" value="InterPro"/>
</dbReference>
<dbReference type="GO" id="GO:0046872">
    <property type="term" value="F:metal ion binding"/>
    <property type="evidence" value="ECO:0007669"/>
    <property type="project" value="UniProtKB-KW"/>
</dbReference>
<dbReference type="GO" id="GO:0015990">
    <property type="term" value="P:electron transport coupled proton transport"/>
    <property type="evidence" value="ECO:0007669"/>
    <property type="project" value="InterPro"/>
</dbReference>
<dbReference type="GO" id="GO:0006123">
    <property type="term" value="P:mitochondrial electron transport, cytochrome c to oxygen"/>
    <property type="evidence" value="ECO:0007669"/>
    <property type="project" value="TreeGrafter"/>
</dbReference>
<dbReference type="CDD" id="cd01663">
    <property type="entry name" value="Cyt_c_Oxidase_I"/>
    <property type="match status" value="1"/>
</dbReference>
<dbReference type="FunFam" id="1.20.210.10:FF:000001">
    <property type="entry name" value="Cytochrome c oxidase subunit 1"/>
    <property type="match status" value="1"/>
</dbReference>
<dbReference type="Gene3D" id="1.20.210.10">
    <property type="entry name" value="Cytochrome c oxidase-like, subunit I domain"/>
    <property type="match status" value="1"/>
</dbReference>
<dbReference type="InterPro" id="IPR023616">
    <property type="entry name" value="Cyt_c_oxase-like_su1_dom"/>
</dbReference>
<dbReference type="InterPro" id="IPR036927">
    <property type="entry name" value="Cyt_c_oxase-like_su1_sf"/>
</dbReference>
<dbReference type="InterPro" id="IPR000883">
    <property type="entry name" value="Cyt_C_Oxase_1"/>
</dbReference>
<dbReference type="InterPro" id="IPR023615">
    <property type="entry name" value="Cyt_c_Oxase_su1_BS"/>
</dbReference>
<dbReference type="InterPro" id="IPR033944">
    <property type="entry name" value="Cyt_c_oxase_su1_dom"/>
</dbReference>
<dbReference type="InterPro" id="IPR014241">
    <property type="entry name" value="Cyt_c_oxidase_su1_bac"/>
</dbReference>
<dbReference type="NCBIfam" id="TIGR02891">
    <property type="entry name" value="CtaD_CoxA"/>
    <property type="match status" value="1"/>
</dbReference>
<dbReference type="PANTHER" id="PTHR10422">
    <property type="entry name" value="CYTOCHROME C OXIDASE SUBUNIT 1"/>
    <property type="match status" value="1"/>
</dbReference>
<dbReference type="PANTHER" id="PTHR10422:SF18">
    <property type="entry name" value="CYTOCHROME C OXIDASE SUBUNIT 1"/>
    <property type="match status" value="1"/>
</dbReference>
<dbReference type="Pfam" id="PF00115">
    <property type="entry name" value="COX1"/>
    <property type="match status" value="1"/>
</dbReference>
<dbReference type="PRINTS" id="PR01165">
    <property type="entry name" value="CYCOXIDASEI"/>
</dbReference>
<dbReference type="SUPFAM" id="SSF81442">
    <property type="entry name" value="Cytochrome c oxidase subunit I-like"/>
    <property type="match status" value="1"/>
</dbReference>
<dbReference type="PROSITE" id="PS50855">
    <property type="entry name" value="COX1"/>
    <property type="match status" value="1"/>
</dbReference>
<dbReference type="PROSITE" id="PS00077">
    <property type="entry name" value="COX1_CUB"/>
    <property type="match status" value="1"/>
</dbReference>
<proteinExistence type="inferred from homology"/>
<evidence type="ECO:0000250" key="1">
    <source>
        <dbReference type="UniProtKB" id="P00396"/>
    </source>
</evidence>
<evidence type="ECO:0000250" key="2">
    <source>
        <dbReference type="UniProtKB" id="P00401"/>
    </source>
</evidence>
<evidence type="ECO:0000255" key="3"/>
<evidence type="ECO:0000305" key="4"/>
<reference key="1">
    <citation type="journal article" date="1993" name="Nucleic Acids Res.">
        <title>Mitochondrial genes in the colourless alga Prototheca wickerhamii resemble plant genes in their exons but fungal genes in their introns.</title>
        <authorList>
            <person name="Wolff G."/>
            <person name="Burger G."/>
            <person name="Lang B.F."/>
            <person name="Kueck U."/>
        </authorList>
    </citation>
    <scope>NUCLEOTIDE SEQUENCE [GENOMIC DNA]</scope>
</reference>
<accession>Q05143</accession>
<keyword id="KW-0106">Calcium</keyword>
<keyword id="KW-0186">Copper</keyword>
<keyword id="KW-0249">Electron transport</keyword>
<keyword id="KW-0349">Heme</keyword>
<keyword id="KW-0408">Iron</keyword>
<keyword id="KW-0460">Magnesium</keyword>
<keyword id="KW-0472">Membrane</keyword>
<keyword id="KW-0479">Metal-binding</keyword>
<keyword id="KW-0496">Mitochondrion</keyword>
<keyword id="KW-0999">Mitochondrion inner membrane</keyword>
<keyword id="KW-0679">Respiratory chain</keyword>
<keyword id="KW-1278">Translocase</keyword>
<keyword id="KW-0812">Transmembrane</keyword>
<keyword id="KW-1133">Transmembrane helix</keyword>
<keyword id="KW-0813">Transport</keyword>
<feature type="chain" id="PRO_0000183403" description="Cytochrome c oxidase subunit 1">
    <location>
        <begin position="1"/>
        <end position="514"/>
    </location>
</feature>
<feature type="transmembrane region" description="Helical" evidence="3">
    <location>
        <begin position="16"/>
        <end position="36"/>
    </location>
</feature>
<feature type="transmembrane region" description="Helical" evidence="3">
    <location>
        <begin position="57"/>
        <end position="77"/>
    </location>
</feature>
<feature type="transmembrane region" description="Helical" evidence="3">
    <location>
        <begin position="78"/>
        <end position="98"/>
    </location>
</feature>
<feature type="transmembrane region" description="Helical" evidence="3">
    <location>
        <begin position="101"/>
        <end position="121"/>
    </location>
</feature>
<feature type="transmembrane region" description="Helical" evidence="3">
    <location>
        <begin position="146"/>
        <end position="166"/>
    </location>
</feature>
<feature type="transmembrane region" description="Helical" evidence="3">
    <location>
        <begin position="182"/>
        <end position="202"/>
    </location>
</feature>
<feature type="transmembrane region" description="Helical" evidence="3">
    <location>
        <begin position="234"/>
        <end position="254"/>
    </location>
</feature>
<feature type="transmembrane region" description="Helical" evidence="3">
    <location>
        <begin position="266"/>
        <end position="286"/>
    </location>
</feature>
<feature type="transmembrane region" description="Helical" evidence="3">
    <location>
        <begin position="309"/>
        <end position="329"/>
    </location>
</feature>
<feature type="transmembrane region" description="Helical" evidence="3">
    <location>
        <begin position="337"/>
        <end position="357"/>
    </location>
</feature>
<feature type="transmembrane region" description="Helical" evidence="3">
    <location>
        <begin position="376"/>
        <end position="396"/>
    </location>
</feature>
<feature type="transmembrane region" description="Helical" evidence="3">
    <location>
        <begin position="413"/>
        <end position="433"/>
    </location>
</feature>
<feature type="transmembrane region" description="Helical" evidence="3">
    <location>
        <begin position="451"/>
        <end position="471"/>
    </location>
</feature>
<feature type="binding site" evidence="2">
    <location>
        <position position="39"/>
    </location>
    <ligand>
        <name>Ca(2+)</name>
        <dbReference type="ChEBI" id="CHEBI:29108"/>
    </ligand>
</feature>
<feature type="binding site" evidence="2">
    <location>
        <position position="44"/>
    </location>
    <ligand>
        <name>Ca(2+)</name>
        <dbReference type="ChEBI" id="CHEBI:29108"/>
    </ligand>
</feature>
<feature type="binding site" description="axial binding residue" evidence="2">
    <location>
        <position position="62"/>
    </location>
    <ligand>
        <name>Fe(II)-heme a</name>
        <dbReference type="ChEBI" id="CHEBI:61715"/>
        <note>low-spin</note>
    </ligand>
    <ligandPart>
        <name>Fe</name>
        <dbReference type="ChEBI" id="CHEBI:18248"/>
    </ligandPart>
</feature>
<feature type="binding site" evidence="2">
    <location>
        <position position="240"/>
    </location>
    <ligand>
        <name>Cu cation</name>
        <dbReference type="ChEBI" id="CHEBI:23378"/>
        <label>B</label>
    </ligand>
</feature>
<feature type="binding site" evidence="1">
    <location>
        <position position="244"/>
    </location>
    <ligand>
        <name>O2</name>
        <dbReference type="ChEBI" id="CHEBI:15379"/>
    </ligand>
</feature>
<feature type="binding site" evidence="2">
    <location>
        <position position="289"/>
    </location>
    <ligand>
        <name>Cu cation</name>
        <dbReference type="ChEBI" id="CHEBI:23378"/>
        <label>B</label>
    </ligand>
</feature>
<feature type="binding site" evidence="2">
    <location>
        <position position="290"/>
    </location>
    <ligand>
        <name>Cu cation</name>
        <dbReference type="ChEBI" id="CHEBI:23378"/>
        <label>B</label>
    </ligand>
</feature>
<feature type="binding site" evidence="2">
    <location>
        <position position="367"/>
    </location>
    <ligand>
        <name>Mg(2+)</name>
        <dbReference type="ChEBI" id="CHEBI:18420"/>
        <note>ligand shared with subunit 2</note>
    </ligand>
</feature>
<feature type="binding site" evidence="2">
    <location>
        <position position="368"/>
    </location>
    <ligand>
        <name>Mg(2+)</name>
        <dbReference type="ChEBI" id="CHEBI:18420"/>
        <note>ligand shared with subunit 2</note>
    </ligand>
</feature>
<feature type="binding site" description="axial binding residue" evidence="2">
    <location>
        <position position="375"/>
    </location>
    <ligand>
        <name>heme a3</name>
        <dbReference type="ChEBI" id="CHEBI:83282"/>
        <note>high-spin</note>
    </ligand>
    <ligandPart>
        <name>Fe</name>
        <dbReference type="ChEBI" id="CHEBI:18248"/>
    </ligandPart>
</feature>
<feature type="binding site" description="axial binding residue" evidence="2">
    <location>
        <position position="377"/>
    </location>
    <ligand>
        <name>Fe(II)-heme a</name>
        <dbReference type="ChEBI" id="CHEBI:61715"/>
        <note>low-spin</note>
    </ligand>
    <ligandPart>
        <name>Fe</name>
        <dbReference type="ChEBI" id="CHEBI:18248"/>
    </ligandPart>
</feature>
<feature type="binding site" evidence="2">
    <location>
        <position position="440"/>
    </location>
    <ligand>
        <name>Ca(2+)</name>
        <dbReference type="ChEBI" id="CHEBI:29108"/>
    </ligand>
</feature>
<feature type="cross-link" description="1'-histidyl-3'-tyrosine (His-Tyr)" evidence="2">
    <location>
        <begin position="240"/>
        <end position="244"/>
    </location>
</feature>